<reference key="1">
    <citation type="journal article" date="1999" name="Infect. Immun.">
        <title>The intercellular adhesion (ica) locus is present in Staphylococcus aureus and is required for biofilm formation.</title>
        <authorList>
            <person name="Cramton S.E."/>
            <person name="Gerke C."/>
            <person name="Schnell N.F."/>
            <person name="Nichols W.W."/>
            <person name="Goetz F."/>
        </authorList>
    </citation>
    <scope>NUCLEOTIDE SEQUENCE [GENOMIC DNA]</scope>
    <scope>ROLE IN BIOFILM FORMATION</scope>
    <scope>DISRUPTION PHENOTYPE</scope>
</reference>
<reference key="2">
    <citation type="book" date="2006" name="Gram positive pathogens, 2nd edition">
        <title>The Staphylococcus aureus NCTC 8325 genome.</title>
        <editorList>
            <person name="Fischetti V."/>
            <person name="Novick R."/>
            <person name="Ferretti J."/>
            <person name="Portnoy D."/>
            <person name="Rood J."/>
        </editorList>
        <authorList>
            <person name="Gillaspy A.F."/>
            <person name="Worrell V."/>
            <person name="Orvis J."/>
            <person name="Roe B.A."/>
            <person name="Dyer D.W."/>
            <person name="Iandolo J.J."/>
        </authorList>
    </citation>
    <scope>NUCLEOTIDE SEQUENCE [LARGE SCALE GENOMIC DNA]</scope>
    <source>
        <strain>NCTC 8325 / PS 47</strain>
    </source>
</reference>
<gene>
    <name type="primary">icaD</name>
    <name type="ordered locus">SAOUHSC_03003</name>
</gene>
<protein>
    <recommendedName>
        <fullName>Poly-beta-1,6-N-acetyl-D-glucosamine synthesis protein IcaD</fullName>
        <shortName>PGA synthesis protein IcaD</shortName>
        <shortName>Poly-beta-1,6-GlcNAc synthesis protein IcaD</shortName>
    </recommendedName>
    <alternativeName>
        <fullName>Biofilm polysaccharide intercellular adhesin synthesis protein IcaD</fullName>
        <shortName>Biofilm PIA synthesis protein IcaD</shortName>
    </alternativeName>
    <alternativeName>
        <fullName>Intercellular adhesion protein D</fullName>
    </alternativeName>
</protein>
<organism>
    <name type="scientific">Staphylococcus aureus (strain NCTC 8325 / PS 47)</name>
    <dbReference type="NCBI Taxonomy" id="93061"/>
    <lineage>
        <taxon>Bacteria</taxon>
        <taxon>Bacillati</taxon>
        <taxon>Bacillota</taxon>
        <taxon>Bacilli</taxon>
        <taxon>Bacillales</taxon>
        <taxon>Staphylococcaceae</taxon>
        <taxon>Staphylococcus</taxon>
    </lineage>
</organism>
<dbReference type="EMBL" id="AF086783">
    <property type="protein sequence ID" value="AAD52056.1"/>
    <property type="molecule type" value="Genomic_DNA"/>
</dbReference>
<dbReference type="EMBL" id="CP000253">
    <property type="protein sequence ID" value="ABD31990.1"/>
    <property type="molecule type" value="Genomic_DNA"/>
</dbReference>
<dbReference type="PIR" id="C90075">
    <property type="entry name" value="C90075"/>
</dbReference>
<dbReference type="RefSeq" id="WP_000240580.1">
    <property type="nucleotide sequence ID" value="NZ_LS483365.1"/>
</dbReference>
<dbReference type="RefSeq" id="YP_501452.1">
    <property type="nucleotide sequence ID" value="NC_007795.1"/>
</dbReference>
<dbReference type="STRING" id="93061.SAOUHSC_03003"/>
<dbReference type="GeneID" id="3921485"/>
<dbReference type="KEGG" id="sao:SAOUHSC_03003"/>
<dbReference type="PATRIC" id="fig|93061.5.peg.2710"/>
<dbReference type="HOGENOM" id="CLU_2289916_0_0_9"/>
<dbReference type="OrthoDB" id="2411567at2"/>
<dbReference type="PHI-base" id="PHI:9886"/>
<dbReference type="PRO" id="PR:Q9RQP8"/>
<dbReference type="Proteomes" id="UP000008816">
    <property type="component" value="Chromosome"/>
</dbReference>
<dbReference type="GO" id="GO:0005886">
    <property type="term" value="C:plasma membrane"/>
    <property type="evidence" value="ECO:0007669"/>
    <property type="project" value="UniProtKB-SubCell"/>
</dbReference>
<dbReference type="InterPro" id="IPR020510">
    <property type="entry name" value="IcaD"/>
</dbReference>
<dbReference type="NCBIfam" id="TIGR03932">
    <property type="entry name" value="PIA_icaD"/>
    <property type="match status" value="1"/>
</dbReference>
<name>ICAD_STAA8</name>
<evidence type="ECO:0000250" key="1"/>
<evidence type="ECO:0000255" key="2"/>
<evidence type="ECO:0000269" key="3">
    <source>
    </source>
</evidence>
<evidence type="ECO:0000305" key="4"/>
<proteinExistence type="inferred from homology"/>
<sequence>MVKPRQREYPTLKSSLNIVRETALIAISCVFWIYCLVVLLVYIGTIFEIHDESINTIRVALNIENTEILDIFETMGIFAIIIFVFFTISILIQKWQRGRES</sequence>
<accession>Q9RQP8</accession>
<accession>Q2FUU8</accession>
<keyword id="KW-1003">Cell membrane</keyword>
<keyword id="KW-0472">Membrane</keyword>
<keyword id="KW-1185">Reference proteome</keyword>
<keyword id="KW-0812">Transmembrane</keyword>
<keyword id="KW-1133">Transmembrane helix</keyword>
<comment type="function">
    <text evidence="1">Necessary for the synthesis of poly-beta-1,6-N-acetyl-D-glucosamine (PNAG, also referred to as PIA), a biofilm adhesin polysaccharide. Is required for full IcaA N-acetylglucosaminyltransferase activity (By similarity).</text>
</comment>
<comment type="subcellular location">
    <subcellularLocation>
        <location evidence="1">Cell membrane</location>
        <topology evidence="1">Multi-pass membrane protein</topology>
    </subcellularLocation>
</comment>
<comment type="disruption phenotype">
    <text evidence="3">Deletion of the icaADBCR genes leads to the inability to form biofilms, produce PIA or mediate N-acetylglucosaminyltransferase activity in vitro.</text>
</comment>
<comment type="similarity">
    <text evidence="4">Belongs to the IcaD family.</text>
</comment>
<feature type="chain" id="PRO_0000084139" description="Poly-beta-1,6-N-acetyl-D-glucosamine synthesis protein IcaD">
    <location>
        <begin position="1"/>
        <end position="101"/>
    </location>
</feature>
<feature type="transmembrane region" description="Helical" evidence="2">
    <location>
        <begin position="23"/>
        <end position="43"/>
    </location>
</feature>
<feature type="transmembrane region" description="Helical" evidence="2">
    <location>
        <begin position="72"/>
        <end position="92"/>
    </location>
</feature>